<gene>
    <name evidence="1" type="primary">efp</name>
    <name type="ordered locus">azo0086</name>
</gene>
<proteinExistence type="inferred from homology"/>
<name>EFP_AZOSB</name>
<organism>
    <name type="scientific">Azoarcus sp. (strain BH72)</name>
    <dbReference type="NCBI Taxonomy" id="418699"/>
    <lineage>
        <taxon>Bacteria</taxon>
        <taxon>Pseudomonadati</taxon>
        <taxon>Pseudomonadota</taxon>
        <taxon>Betaproteobacteria</taxon>
        <taxon>Rhodocyclales</taxon>
        <taxon>Zoogloeaceae</taxon>
        <taxon>Azoarcus</taxon>
    </lineage>
</organism>
<reference key="1">
    <citation type="journal article" date="2006" name="Nat. Biotechnol.">
        <title>Complete genome of the mutualistic, N2-fixing grass endophyte Azoarcus sp. strain BH72.</title>
        <authorList>
            <person name="Krause A."/>
            <person name="Ramakumar A."/>
            <person name="Bartels D."/>
            <person name="Battistoni F."/>
            <person name="Bekel T."/>
            <person name="Boch J."/>
            <person name="Boehm M."/>
            <person name="Friedrich F."/>
            <person name="Hurek T."/>
            <person name="Krause L."/>
            <person name="Linke B."/>
            <person name="McHardy A.C."/>
            <person name="Sarkar A."/>
            <person name="Schneiker S."/>
            <person name="Syed A.A."/>
            <person name="Thauer R."/>
            <person name="Vorhoelter F.-J."/>
            <person name="Weidner S."/>
            <person name="Puehler A."/>
            <person name="Reinhold-Hurek B."/>
            <person name="Kaiser O."/>
            <person name="Goesmann A."/>
        </authorList>
    </citation>
    <scope>NUCLEOTIDE SEQUENCE [LARGE SCALE GENOMIC DNA]</scope>
    <source>
        <strain>BH72</strain>
    </source>
</reference>
<protein>
    <recommendedName>
        <fullName evidence="1">Elongation factor P</fullName>
        <shortName evidence="1">EF-P</shortName>
    </recommendedName>
</protein>
<dbReference type="EMBL" id="AM406670">
    <property type="protein sequence ID" value="CAL92704.1"/>
    <property type="molecule type" value="Genomic_DNA"/>
</dbReference>
<dbReference type="RefSeq" id="WP_011763823.1">
    <property type="nucleotide sequence ID" value="NC_008702.1"/>
</dbReference>
<dbReference type="SMR" id="A1K1J9"/>
<dbReference type="STRING" id="62928.azo0086"/>
<dbReference type="KEGG" id="aoa:dqs_0096"/>
<dbReference type="KEGG" id="azo:azo0086"/>
<dbReference type="eggNOG" id="COG0231">
    <property type="taxonomic scope" value="Bacteria"/>
</dbReference>
<dbReference type="HOGENOM" id="CLU_074944_2_1_4"/>
<dbReference type="OrthoDB" id="9801844at2"/>
<dbReference type="UniPathway" id="UPA00345"/>
<dbReference type="Proteomes" id="UP000002588">
    <property type="component" value="Chromosome"/>
</dbReference>
<dbReference type="GO" id="GO:0005737">
    <property type="term" value="C:cytoplasm"/>
    <property type="evidence" value="ECO:0007669"/>
    <property type="project" value="UniProtKB-SubCell"/>
</dbReference>
<dbReference type="GO" id="GO:0003746">
    <property type="term" value="F:translation elongation factor activity"/>
    <property type="evidence" value="ECO:0007669"/>
    <property type="project" value="UniProtKB-UniRule"/>
</dbReference>
<dbReference type="GO" id="GO:0043043">
    <property type="term" value="P:peptide biosynthetic process"/>
    <property type="evidence" value="ECO:0007669"/>
    <property type="project" value="InterPro"/>
</dbReference>
<dbReference type="CDD" id="cd04470">
    <property type="entry name" value="S1_EF-P_repeat_1"/>
    <property type="match status" value="1"/>
</dbReference>
<dbReference type="CDD" id="cd05794">
    <property type="entry name" value="S1_EF-P_repeat_2"/>
    <property type="match status" value="1"/>
</dbReference>
<dbReference type="FunFam" id="2.30.30.30:FF:000003">
    <property type="entry name" value="Elongation factor P"/>
    <property type="match status" value="1"/>
</dbReference>
<dbReference type="FunFam" id="2.40.50.140:FF:000004">
    <property type="entry name" value="Elongation factor P"/>
    <property type="match status" value="1"/>
</dbReference>
<dbReference type="FunFam" id="2.40.50.140:FF:000009">
    <property type="entry name" value="Elongation factor P"/>
    <property type="match status" value="1"/>
</dbReference>
<dbReference type="Gene3D" id="2.30.30.30">
    <property type="match status" value="1"/>
</dbReference>
<dbReference type="Gene3D" id="2.40.50.140">
    <property type="entry name" value="Nucleic acid-binding proteins"/>
    <property type="match status" value="2"/>
</dbReference>
<dbReference type="HAMAP" id="MF_00141">
    <property type="entry name" value="EF_P"/>
    <property type="match status" value="1"/>
</dbReference>
<dbReference type="InterPro" id="IPR015365">
    <property type="entry name" value="Elong-fact-P_C"/>
</dbReference>
<dbReference type="InterPro" id="IPR012340">
    <property type="entry name" value="NA-bd_OB-fold"/>
</dbReference>
<dbReference type="InterPro" id="IPR014722">
    <property type="entry name" value="Rib_uL2_dom2"/>
</dbReference>
<dbReference type="InterPro" id="IPR020599">
    <property type="entry name" value="Transl_elong_fac_P/YeiP"/>
</dbReference>
<dbReference type="InterPro" id="IPR013185">
    <property type="entry name" value="Transl_elong_KOW-like"/>
</dbReference>
<dbReference type="InterPro" id="IPR001059">
    <property type="entry name" value="Transl_elong_P/YeiP_cen"/>
</dbReference>
<dbReference type="InterPro" id="IPR013852">
    <property type="entry name" value="Transl_elong_P/YeiP_CS"/>
</dbReference>
<dbReference type="InterPro" id="IPR011768">
    <property type="entry name" value="Transl_elongation_fac_P"/>
</dbReference>
<dbReference type="InterPro" id="IPR008991">
    <property type="entry name" value="Translation_prot_SH3-like_sf"/>
</dbReference>
<dbReference type="NCBIfam" id="TIGR00038">
    <property type="entry name" value="efp"/>
    <property type="match status" value="1"/>
</dbReference>
<dbReference type="NCBIfam" id="NF001810">
    <property type="entry name" value="PRK00529.1"/>
    <property type="match status" value="1"/>
</dbReference>
<dbReference type="PANTHER" id="PTHR30053">
    <property type="entry name" value="ELONGATION FACTOR P"/>
    <property type="match status" value="1"/>
</dbReference>
<dbReference type="PANTHER" id="PTHR30053:SF12">
    <property type="entry name" value="ELONGATION FACTOR P (EF-P) FAMILY PROTEIN"/>
    <property type="match status" value="1"/>
</dbReference>
<dbReference type="Pfam" id="PF01132">
    <property type="entry name" value="EFP"/>
    <property type="match status" value="1"/>
</dbReference>
<dbReference type="Pfam" id="PF08207">
    <property type="entry name" value="EFP_N"/>
    <property type="match status" value="1"/>
</dbReference>
<dbReference type="Pfam" id="PF09285">
    <property type="entry name" value="Elong-fact-P_C"/>
    <property type="match status" value="1"/>
</dbReference>
<dbReference type="PIRSF" id="PIRSF005901">
    <property type="entry name" value="EF-P"/>
    <property type="match status" value="1"/>
</dbReference>
<dbReference type="SMART" id="SM01185">
    <property type="entry name" value="EFP"/>
    <property type="match status" value="1"/>
</dbReference>
<dbReference type="SMART" id="SM00841">
    <property type="entry name" value="Elong-fact-P_C"/>
    <property type="match status" value="1"/>
</dbReference>
<dbReference type="SUPFAM" id="SSF50249">
    <property type="entry name" value="Nucleic acid-binding proteins"/>
    <property type="match status" value="2"/>
</dbReference>
<dbReference type="SUPFAM" id="SSF50104">
    <property type="entry name" value="Translation proteins SH3-like domain"/>
    <property type="match status" value="1"/>
</dbReference>
<dbReference type="PROSITE" id="PS01275">
    <property type="entry name" value="EFP"/>
    <property type="match status" value="1"/>
</dbReference>
<feature type="chain" id="PRO_1000010680" description="Elongation factor P">
    <location>
        <begin position="1"/>
        <end position="185"/>
    </location>
</feature>
<accession>A1K1J9</accession>
<sequence>MKTAQELRSGNVIMVGSDPLVVQKAEYNKSGRNAAVVKMKLKNLLTGAPSESVYKADDKFEVVQLDRKEVTYSYFADPMYVFMDADYEQFEVEAENMTDALKYLEDGLQCEVVFYNGKAISVELPTTVVREVVYTEPAVKGDTSGKVMKPAKIATGFELPVPAFVEIGDKIEIDTRTDEYKNRVK</sequence>
<keyword id="KW-0963">Cytoplasm</keyword>
<keyword id="KW-0251">Elongation factor</keyword>
<keyword id="KW-0648">Protein biosynthesis</keyword>
<keyword id="KW-1185">Reference proteome</keyword>
<evidence type="ECO:0000255" key="1">
    <source>
        <dbReference type="HAMAP-Rule" id="MF_00141"/>
    </source>
</evidence>
<comment type="function">
    <text evidence="1">Involved in peptide bond synthesis. Stimulates efficient translation and peptide-bond synthesis on native or reconstituted 70S ribosomes in vitro. Probably functions indirectly by altering the affinity of the ribosome for aminoacyl-tRNA, thus increasing their reactivity as acceptors for peptidyl transferase.</text>
</comment>
<comment type="pathway">
    <text evidence="1">Protein biosynthesis; polypeptide chain elongation.</text>
</comment>
<comment type="subcellular location">
    <subcellularLocation>
        <location evidence="1">Cytoplasm</location>
    </subcellularLocation>
</comment>
<comment type="similarity">
    <text evidence="1">Belongs to the elongation factor P family.</text>
</comment>